<protein>
    <recommendedName>
        <fullName evidence="1">Methylthioribose-1-phosphate isomerase</fullName>
        <shortName evidence="1">M1Pi</shortName>
        <shortName evidence="1">MTR-1-P isomerase</shortName>
        <ecNumber evidence="1">5.3.1.23</ecNumber>
    </recommendedName>
    <alternativeName>
        <fullName evidence="1">S-methyl-5-thioribose-1-phosphate isomerase</fullName>
    </alternativeName>
    <alternativeName>
        <fullName evidence="1">Translation initiation factor eIF-2B subunit alpha/beta/delta-like protein</fullName>
    </alternativeName>
</protein>
<name>MTNA_ARTOC</name>
<sequence>MSLQSIRYKRGMLQVLDQLQVPHVERYIPVSTAKEGWHVIKEMHVRGAPAIAIVAVLSLSIELTELMDHEKLSTEADEVEAYILEKLDYLVTSRPTAVNLSDAAIKLKTLVQKRKQIGDPKGKDLAEAYVEAAEKMLIDDAMDNHRLGDFGATWIVNNTPVGKEGKKVGVLTHCNTGSLATAGYGTALGVIRSLLASDKLEHAYCTETRPYNQGARLTAFELVHDKIPATLITDSMAASLLAQKGAGLAAIVVGADRVVANGDTANKIGTYQLAVLAKYHGVKFIVAAPRTTIDLRTKEGEDIIIEERAKSEVTRITGPRISDLGKNEENITLETVNIAAPGIDVWNPAFDVTPYDLIDAIVTEVGVAEKNADGLFQLEKLFGFP</sequence>
<reference key="1">
    <citation type="journal article" date="2012" name="MBio">
        <title>Comparative genome analysis of Trichophyton rubrum and related dermatophytes reveals candidate genes involved in infection.</title>
        <authorList>
            <person name="Martinez D.A."/>
            <person name="Oliver B.G."/>
            <person name="Graeser Y."/>
            <person name="Goldberg J.M."/>
            <person name="Li W."/>
            <person name="Martinez-Rossi N.M."/>
            <person name="Monod M."/>
            <person name="Shelest E."/>
            <person name="Barton R.C."/>
            <person name="Birch E."/>
            <person name="Brakhage A.A."/>
            <person name="Chen Z."/>
            <person name="Gurr S.J."/>
            <person name="Heiman D."/>
            <person name="Heitman J."/>
            <person name="Kosti I."/>
            <person name="Rossi A."/>
            <person name="Saif S."/>
            <person name="Samalova M."/>
            <person name="Saunders C.W."/>
            <person name="Shea T."/>
            <person name="Summerbell R.C."/>
            <person name="Xu J."/>
            <person name="Young S."/>
            <person name="Zeng Q."/>
            <person name="Birren B.W."/>
            <person name="Cuomo C.A."/>
            <person name="White T.C."/>
        </authorList>
    </citation>
    <scope>NUCLEOTIDE SEQUENCE [LARGE SCALE GENOMIC DNA]</scope>
    <source>
        <strain>ATCC MYA-4605 / CBS 113480</strain>
    </source>
</reference>
<accession>C5FY68</accession>
<keyword id="KW-0028">Amino-acid biosynthesis</keyword>
<keyword id="KW-0963">Cytoplasm</keyword>
<keyword id="KW-0413">Isomerase</keyword>
<keyword id="KW-0486">Methionine biosynthesis</keyword>
<keyword id="KW-0539">Nucleus</keyword>
<keyword id="KW-1185">Reference proteome</keyword>
<comment type="function">
    <text evidence="1">Catalyzes the interconversion of methylthioribose-1-phosphate (MTR-1-P) into methylthioribulose-1-phosphate (MTRu-1-P).</text>
</comment>
<comment type="catalytic activity">
    <reaction evidence="1">
        <text>5-(methylsulfanyl)-alpha-D-ribose 1-phosphate = 5-(methylsulfanyl)-D-ribulose 1-phosphate</text>
        <dbReference type="Rhea" id="RHEA:19989"/>
        <dbReference type="ChEBI" id="CHEBI:58533"/>
        <dbReference type="ChEBI" id="CHEBI:58548"/>
        <dbReference type="EC" id="5.3.1.23"/>
    </reaction>
</comment>
<comment type="pathway">
    <text evidence="1">Amino-acid biosynthesis; L-methionine biosynthesis via salvage pathway; L-methionine from S-methyl-5-thio-alpha-D-ribose 1-phosphate: step 1/6.</text>
</comment>
<comment type="subcellular location">
    <subcellularLocation>
        <location evidence="1">Cytoplasm</location>
    </subcellularLocation>
    <subcellularLocation>
        <location evidence="1">Nucleus</location>
    </subcellularLocation>
</comment>
<comment type="similarity">
    <text evidence="1">Belongs to the eIF-2B alpha/beta/delta subunits family. MtnA subfamily.</text>
</comment>
<proteinExistence type="inferred from homology"/>
<dbReference type="EC" id="5.3.1.23" evidence="1"/>
<dbReference type="EMBL" id="DS995707">
    <property type="protein sequence ID" value="EEQ34466.1"/>
    <property type="molecule type" value="Genomic_DNA"/>
</dbReference>
<dbReference type="RefSeq" id="XP_002843502.1">
    <property type="nucleotide sequence ID" value="XM_002843456.1"/>
</dbReference>
<dbReference type="SMR" id="C5FY68"/>
<dbReference type="STRING" id="554155.C5FY68"/>
<dbReference type="GeneID" id="9226808"/>
<dbReference type="VEuPathDB" id="FungiDB:MCYG_07285"/>
<dbReference type="eggNOG" id="KOG1468">
    <property type="taxonomic scope" value="Eukaryota"/>
</dbReference>
<dbReference type="HOGENOM" id="CLU_016218_1_3_1"/>
<dbReference type="OMA" id="CETRPLN"/>
<dbReference type="OrthoDB" id="2461at2759"/>
<dbReference type="UniPathway" id="UPA00904">
    <property type="reaction ID" value="UER00874"/>
</dbReference>
<dbReference type="Proteomes" id="UP000002035">
    <property type="component" value="Unassembled WGS sequence"/>
</dbReference>
<dbReference type="GO" id="GO:0005737">
    <property type="term" value="C:cytoplasm"/>
    <property type="evidence" value="ECO:0007669"/>
    <property type="project" value="UniProtKB-SubCell"/>
</dbReference>
<dbReference type="GO" id="GO:0005634">
    <property type="term" value="C:nucleus"/>
    <property type="evidence" value="ECO:0007669"/>
    <property type="project" value="UniProtKB-SubCell"/>
</dbReference>
<dbReference type="GO" id="GO:0046523">
    <property type="term" value="F:S-methyl-5-thioribose-1-phosphate isomerase activity"/>
    <property type="evidence" value="ECO:0007669"/>
    <property type="project" value="UniProtKB-UniRule"/>
</dbReference>
<dbReference type="GO" id="GO:0019509">
    <property type="term" value="P:L-methionine salvage from methylthioadenosine"/>
    <property type="evidence" value="ECO:0007669"/>
    <property type="project" value="UniProtKB-UniRule"/>
</dbReference>
<dbReference type="FunFam" id="1.20.120.420:FF:000003">
    <property type="entry name" value="Methylthioribose-1-phosphate isomerase"/>
    <property type="match status" value="1"/>
</dbReference>
<dbReference type="FunFam" id="3.40.50.10470:FF:000006">
    <property type="entry name" value="Methylthioribose-1-phosphate isomerase"/>
    <property type="match status" value="1"/>
</dbReference>
<dbReference type="Gene3D" id="1.20.120.420">
    <property type="entry name" value="translation initiation factor eif-2b, domain 1"/>
    <property type="match status" value="1"/>
</dbReference>
<dbReference type="Gene3D" id="3.40.50.10470">
    <property type="entry name" value="Translation initiation factor eif-2b, domain 2"/>
    <property type="match status" value="1"/>
</dbReference>
<dbReference type="HAMAP" id="MF_01678">
    <property type="entry name" value="Salvage_MtnA"/>
    <property type="match status" value="1"/>
</dbReference>
<dbReference type="InterPro" id="IPR000649">
    <property type="entry name" value="IF-2B-related"/>
</dbReference>
<dbReference type="InterPro" id="IPR005251">
    <property type="entry name" value="IF-M1Pi"/>
</dbReference>
<dbReference type="InterPro" id="IPR042529">
    <property type="entry name" value="IF_2B-like_C"/>
</dbReference>
<dbReference type="InterPro" id="IPR011559">
    <property type="entry name" value="Initiation_fac_2B_a/b/d"/>
</dbReference>
<dbReference type="InterPro" id="IPR027363">
    <property type="entry name" value="M1Pi_N"/>
</dbReference>
<dbReference type="InterPro" id="IPR037171">
    <property type="entry name" value="NagB/RpiA_transferase-like"/>
</dbReference>
<dbReference type="NCBIfam" id="TIGR00524">
    <property type="entry name" value="eIF-2B_rel"/>
    <property type="match status" value="1"/>
</dbReference>
<dbReference type="NCBIfam" id="NF004326">
    <property type="entry name" value="PRK05720.1"/>
    <property type="match status" value="1"/>
</dbReference>
<dbReference type="NCBIfam" id="TIGR00512">
    <property type="entry name" value="salvage_mtnA"/>
    <property type="match status" value="1"/>
</dbReference>
<dbReference type="PANTHER" id="PTHR43475">
    <property type="entry name" value="METHYLTHIORIBOSE-1-PHOSPHATE ISOMERASE"/>
    <property type="match status" value="1"/>
</dbReference>
<dbReference type="PANTHER" id="PTHR43475:SF1">
    <property type="entry name" value="METHYLTHIORIBOSE-1-PHOSPHATE ISOMERASE"/>
    <property type="match status" value="1"/>
</dbReference>
<dbReference type="Pfam" id="PF01008">
    <property type="entry name" value="IF-2B"/>
    <property type="match status" value="1"/>
</dbReference>
<dbReference type="SUPFAM" id="SSF100950">
    <property type="entry name" value="NagB/RpiA/CoA transferase-like"/>
    <property type="match status" value="1"/>
</dbReference>
<feature type="chain" id="PRO_0000402033" description="Methylthioribose-1-phosphate isomerase">
    <location>
        <begin position="1"/>
        <end position="385"/>
    </location>
</feature>
<feature type="active site" description="Proton donor" evidence="1">
    <location>
        <position position="256"/>
    </location>
</feature>
<feature type="site" description="Transition state stabilizer" evidence="1">
    <location>
        <position position="174"/>
    </location>
</feature>
<organism>
    <name type="scientific">Arthroderma otae (strain ATCC MYA-4605 / CBS 113480)</name>
    <name type="common">Microsporum canis</name>
    <dbReference type="NCBI Taxonomy" id="554155"/>
    <lineage>
        <taxon>Eukaryota</taxon>
        <taxon>Fungi</taxon>
        <taxon>Dikarya</taxon>
        <taxon>Ascomycota</taxon>
        <taxon>Pezizomycotina</taxon>
        <taxon>Eurotiomycetes</taxon>
        <taxon>Eurotiomycetidae</taxon>
        <taxon>Onygenales</taxon>
        <taxon>Arthrodermataceae</taxon>
        <taxon>Microsporum</taxon>
    </lineage>
</organism>
<gene>
    <name evidence="1" type="primary">MRI1</name>
    <name type="ORF">MCYG_07285</name>
</gene>
<evidence type="ECO:0000255" key="1">
    <source>
        <dbReference type="HAMAP-Rule" id="MF_03119"/>
    </source>
</evidence>